<organism>
    <name type="scientific">Parabuthus transvaalicus</name>
    <name type="common">Transvaal thick-tailed scorpion</name>
    <dbReference type="NCBI Taxonomy" id="170972"/>
    <lineage>
        <taxon>Eukaryota</taxon>
        <taxon>Metazoa</taxon>
        <taxon>Ecdysozoa</taxon>
        <taxon>Arthropoda</taxon>
        <taxon>Chelicerata</taxon>
        <taxon>Arachnida</taxon>
        <taxon>Scorpiones</taxon>
        <taxon>Buthida</taxon>
        <taxon>Buthoidea</taxon>
        <taxon>Buthidae</taxon>
        <taxon>Parabuthus</taxon>
    </lineage>
</organism>
<proteinExistence type="evidence at protein level"/>
<accession>P58910</accession>
<keyword id="KW-0002">3D-structure</keyword>
<keyword id="KW-0108">Calcium channel impairing toxin</keyword>
<keyword id="KW-0903">Direct protein sequencing</keyword>
<keyword id="KW-1015">Disulfide bond</keyword>
<keyword id="KW-0872">Ion channel impairing toxin</keyword>
<keyword id="KW-0528">Neurotoxin</keyword>
<keyword id="KW-0964">Secreted</keyword>
<keyword id="KW-0800">Toxin</keyword>
<keyword id="KW-1218">Voltage-gated calcium channel impairing toxin</keyword>
<keyword id="KW-0738">Voltage-gated sodium channel impairing toxin</keyword>
<reference key="1">
    <citation type="journal article" date="1998" name="Nat. Neurosci.">
        <title>Inhibition of T-type voltage-gated calcium channels by a new scorpion toxin.</title>
        <authorList>
            <person name="Chuang R.S.-I."/>
            <person name="Jaffe H."/>
            <person name="Cribbs L."/>
            <person name="Perez-Reyes E."/>
            <person name="Swartz K.J."/>
        </authorList>
    </citation>
    <scope>PROTEIN SEQUENCE</scope>
    <scope>MASS SPECTROMETRY</scope>
    <scope>FUNCTION</scope>
    <scope>SUBCELLULAR LOCATION</scope>
    <source>
        <tissue>Venom</tissue>
    </source>
</reference>
<reference key="2">
    <citation type="journal article" date="2002" name="J. Neurosci.">
        <title>Kurtoxin, a gating modifier of neuronal high- and low-threshold Ca channels.</title>
        <authorList>
            <person name="Sidach S.S."/>
            <person name="Mintz I.M."/>
        </authorList>
    </citation>
    <scope>FUNCTION ON CALCIUM CHANNELS</scope>
</reference>
<reference key="3">
    <citation type="submission" date="2005-06" db="PDB data bank">
        <title>Solution structure of kurtoxin.</title>
        <authorList>
            <person name="Lee C.W."/>
            <person name="Min H.J."/>
            <person name="Cho E.M."/>
            <person name="Kohno T."/>
            <person name="Eu Y.J."/>
            <person name="Kim J.I."/>
        </authorList>
    </citation>
    <scope>STRUCTURE BY NMR</scope>
    <scope>DISULFIDE BONDS</scope>
</reference>
<feature type="chain" id="PRO_0000066792" description="Kurtoxin" evidence="3">
    <location>
        <begin position="1"/>
        <end position="63"/>
    </location>
</feature>
<feature type="domain" description="LCN-type CS-alpha/beta" evidence="2">
    <location>
        <begin position="2"/>
        <end position="62"/>
    </location>
</feature>
<feature type="disulfide bond" evidence="5 10">
    <location>
        <begin position="12"/>
        <end position="61"/>
    </location>
</feature>
<feature type="disulfide bond" evidence="5 10">
    <location>
        <begin position="16"/>
        <end position="37"/>
    </location>
</feature>
<feature type="disulfide bond" evidence="5 10">
    <location>
        <begin position="23"/>
        <end position="44"/>
    </location>
</feature>
<feature type="disulfide bond" evidence="5 10">
    <location>
        <begin position="27"/>
        <end position="46"/>
    </location>
</feature>
<feature type="strand" evidence="11">
    <location>
        <begin position="2"/>
        <end position="4"/>
    </location>
</feature>
<feature type="strand" evidence="11">
    <location>
        <begin position="9"/>
        <end position="11"/>
    </location>
</feature>
<feature type="turn" evidence="11">
    <location>
        <begin position="12"/>
        <end position="15"/>
    </location>
</feature>
<feature type="strand" evidence="11">
    <location>
        <begin position="18"/>
        <end position="20"/>
    </location>
</feature>
<feature type="helix" evidence="11">
    <location>
        <begin position="22"/>
        <end position="29"/>
    </location>
</feature>
<feature type="strand" evidence="11">
    <location>
        <begin position="33"/>
        <end position="37"/>
    </location>
</feature>
<feature type="turn" evidence="11">
    <location>
        <begin position="39"/>
        <end position="41"/>
    </location>
</feature>
<feature type="strand" evidence="11">
    <location>
        <begin position="44"/>
        <end position="49"/>
    </location>
</feature>
<sequence>KIDGYPVDYWNCKRICWYNNKYCNDLCKGLKADSGYCWGWTLSCYCQGLPDNARIKRSGRCRA</sequence>
<comment type="function">
    <text evidence="1 3 4">This neurotoxin acts on sodium and calcium channels (PubMed:10196582, PubMed:11896142). It acts on Nav1.2/SCN2A and Nav1.5/SCN5A sodium channels and slows their inactivation (By similarity) (PubMed:11896142). Also binds to Cav3.1/CACNA1G, Cav3.2/CACNA1H and Cav3.3/CACNA1I T-type calcium channels with high affinity and inhibits the channels by modifying voltage-dependent gating (By similarity) (PubMed:10196582). Also targets neuronal high-threshold calcium channels, including P-type, N-type, and L-type calcium channels (Cav), and others that still are unidentified pharmacologically (PubMed:11896142).</text>
</comment>
<comment type="subcellular location">
    <subcellularLocation>
        <location evidence="3">Secreted</location>
    </subcellularLocation>
</comment>
<comment type="tissue specificity">
    <text evidence="9">Expressed by the venom gland.</text>
</comment>
<comment type="domain">
    <text evidence="8">Has the structural arrangement of an alpha-helix connected to antiparallel beta-sheets by disulfide bonds (CS-alpha/beta).</text>
</comment>
<comment type="mass spectrometry"/>
<comment type="miscellaneous">
    <text evidence="3">Negative results: does not affect Cav1.2/CACNA1C, Cav2.1/CACNA1A, Cav2.2/CACNA1B, and Cav2.3/CACNA1E calcium channels.</text>
</comment>
<comment type="miscellaneous">
    <text evidence="8">The primary structure of the mature protein is identical to that of Kurtoxin-like II from Parabuthus granulatus (AC P0C5F1).</text>
</comment>
<comment type="similarity">
    <text evidence="8">Belongs to the long (4 C-C) scorpion toxin superfamily. Sodium channel inhibitor family. Alpha subfamily.</text>
</comment>
<evidence type="ECO:0000250" key="1">
    <source>
        <dbReference type="UniProtKB" id="P0C5F1"/>
    </source>
</evidence>
<evidence type="ECO:0000255" key="2">
    <source>
        <dbReference type="PROSITE-ProRule" id="PRU01210"/>
    </source>
</evidence>
<evidence type="ECO:0000269" key="3">
    <source>
    </source>
</evidence>
<evidence type="ECO:0000269" key="4">
    <source>
    </source>
</evidence>
<evidence type="ECO:0000269" key="5">
    <source ref="3"/>
</evidence>
<evidence type="ECO:0000303" key="6">
    <source>
    </source>
</evidence>
<evidence type="ECO:0000303" key="7">
    <source>
    </source>
</evidence>
<evidence type="ECO:0000305" key="8"/>
<evidence type="ECO:0000305" key="9">
    <source>
    </source>
</evidence>
<evidence type="ECO:0000312" key="10">
    <source>
        <dbReference type="PDB" id="1T1T"/>
    </source>
</evidence>
<evidence type="ECO:0007829" key="11">
    <source>
        <dbReference type="PDB" id="1T1T"/>
    </source>
</evidence>
<dbReference type="PDB" id="1T1T">
    <property type="method" value="NMR"/>
    <property type="chains" value="A=1-63"/>
</dbReference>
<dbReference type="PDBsum" id="1T1T"/>
<dbReference type="SMR" id="P58910"/>
<dbReference type="EvolutionaryTrace" id="P58910"/>
<dbReference type="GO" id="GO:0005576">
    <property type="term" value="C:extracellular region"/>
    <property type="evidence" value="ECO:0007669"/>
    <property type="project" value="UniProtKB-SubCell"/>
</dbReference>
<dbReference type="GO" id="GO:0005246">
    <property type="term" value="F:calcium channel regulator activity"/>
    <property type="evidence" value="ECO:0007669"/>
    <property type="project" value="UniProtKB-KW"/>
</dbReference>
<dbReference type="GO" id="GO:0019871">
    <property type="term" value="F:sodium channel inhibitor activity"/>
    <property type="evidence" value="ECO:0007669"/>
    <property type="project" value="InterPro"/>
</dbReference>
<dbReference type="GO" id="GO:0090729">
    <property type="term" value="F:toxin activity"/>
    <property type="evidence" value="ECO:0007669"/>
    <property type="project" value="UniProtKB-KW"/>
</dbReference>
<dbReference type="GO" id="GO:0006952">
    <property type="term" value="P:defense response"/>
    <property type="evidence" value="ECO:0007669"/>
    <property type="project" value="InterPro"/>
</dbReference>
<dbReference type="CDD" id="cd23106">
    <property type="entry name" value="neurotoxins_LC_scorpion"/>
    <property type="match status" value="1"/>
</dbReference>
<dbReference type="Gene3D" id="3.30.30.10">
    <property type="entry name" value="Knottin, scorpion toxin-like"/>
    <property type="match status" value="1"/>
</dbReference>
<dbReference type="InterPro" id="IPR044062">
    <property type="entry name" value="LCN-type_CS_alpha_beta_dom"/>
</dbReference>
<dbReference type="InterPro" id="IPR003614">
    <property type="entry name" value="Scorpion_toxin-like"/>
</dbReference>
<dbReference type="InterPro" id="IPR036574">
    <property type="entry name" value="Scorpion_toxin-like_sf"/>
</dbReference>
<dbReference type="InterPro" id="IPR018218">
    <property type="entry name" value="Scorpion_toxinL"/>
</dbReference>
<dbReference type="InterPro" id="IPR002061">
    <property type="entry name" value="Scorpion_toxinL/defensin"/>
</dbReference>
<dbReference type="Pfam" id="PF00537">
    <property type="entry name" value="Toxin_3"/>
    <property type="match status" value="1"/>
</dbReference>
<dbReference type="PRINTS" id="PR00285">
    <property type="entry name" value="SCORPNTOXIN"/>
</dbReference>
<dbReference type="SMART" id="SM00505">
    <property type="entry name" value="Knot1"/>
    <property type="match status" value="1"/>
</dbReference>
<dbReference type="SUPFAM" id="SSF57095">
    <property type="entry name" value="Scorpion toxin-like"/>
    <property type="match status" value="1"/>
</dbReference>
<dbReference type="PROSITE" id="PS51863">
    <property type="entry name" value="LCN_CSAB"/>
    <property type="match status" value="1"/>
</dbReference>
<protein>
    <recommendedName>
        <fullName evidence="6 7">Kurtoxin</fullName>
        <shortName evidence="6">Ktx</shortName>
    </recommendedName>
</protein>
<name>KURT_PARTR</name>